<organism>
    <name type="scientific">Dictyostelium discoideum</name>
    <name type="common">Social amoeba</name>
    <dbReference type="NCBI Taxonomy" id="44689"/>
    <lineage>
        <taxon>Eukaryota</taxon>
        <taxon>Amoebozoa</taxon>
        <taxon>Evosea</taxon>
        <taxon>Eumycetozoa</taxon>
        <taxon>Dictyostelia</taxon>
        <taxon>Dictyosteliales</taxon>
        <taxon>Dictyosteliaceae</taxon>
        <taxon>Dictyostelium</taxon>
    </lineage>
</organism>
<proteinExistence type="inferred from homology"/>
<gene>
    <name type="primary">snrpb</name>
    <name type="ORF">DDB_G0272320</name>
</gene>
<accession>Q55A45</accession>
<accession>Q86KZ7</accession>
<sequence length="274" mass="28157">MSGMPKSSKMLQYINYRMRVTIQDGRVIVGRFLAFDKHMNVVICDAEEFRRIRQKGKEDREEKRTLGMILIRGETVVSMSVEAPPPEEAKLAATSKMPPQIPGGPGIGRAVGRGMPMGGMGMGGSGPMSGLTGPVRGVGGPAPHSMMPGGGVPPPMGRGGFPPQGFPPGGPSPQGAFNNNPNNNNGGPPQGFPPGGPIGRGGFPPQGFPPGGPMGGPNLNNGNMPPQGFPPGGPMGRGGFPPQGFPPGGPNFNNMPPQGFPPGGPMGRGGFQRK</sequence>
<evidence type="ECO:0000250" key="1">
    <source>
        <dbReference type="UniProtKB" id="P14678"/>
    </source>
</evidence>
<evidence type="ECO:0000255" key="2">
    <source>
        <dbReference type="PROSITE-ProRule" id="PRU01346"/>
    </source>
</evidence>
<evidence type="ECO:0000256" key="3">
    <source>
        <dbReference type="SAM" id="MobiDB-lite"/>
    </source>
</evidence>
<evidence type="ECO:0000305" key="4"/>
<protein>
    <recommendedName>
        <fullName>Small nuclear ribonucleoprotein-associated protein B</fullName>
        <shortName>snRNP-B</shortName>
    </recommendedName>
    <alternativeName>
        <fullName>Sm protein B</fullName>
        <shortName>Sm-B</shortName>
        <shortName>SmB</shortName>
    </alternativeName>
</protein>
<keyword id="KW-0963">Cytoplasm</keyword>
<keyword id="KW-0507">mRNA processing</keyword>
<keyword id="KW-0508">mRNA splicing</keyword>
<keyword id="KW-0539">Nucleus</keyword>
<keyword id="KW-1185">Reference proteome</keyword>
<keyword id="KW-0677">Repeat</keyword>
<keyword id="KW-0687">Ribonucleoprotein</keyword>
<keyword id="KW-0694">RNA-binding</keyword>
<keyword id="KW-0747">Spliceosome</keyword>
<name>RSMB_DICDI</name>
<feature type="chain" id="PRO_0000328110" description="Small nuclear ribonucleoprotein-associated protein B">
    <location>
        <begin position="1"/>
        <end position="274"/>
    </location>
</feature>
<feature type="domain" description="Sm" evidence="2">
    <location>
        <begin position="5"/>
        <end position="85"/>
    </location>
</feature>
<feature type="repeat" description="1">
    <location>
        <begin position="162"/>
        <end position="171"/>
    </location>
</feature>
<feature type="repeat" description="2">
    <location>
        <begin position="188"/>
        <end position="197"/>
    </location>
</feature>
<feature type="repeat" description="3">
    <location>
        <begin position="204"/>
        <end position="213"/>
    </location>
</feature>
<feature type="repeat" description="4">
    <location>
        <begin position="225"/>
        <end position="234"/>
    </location>
</feature>
<feature type="repeat" description="5">
    <location>
        <begin position="241"/>
        <end position="250"/>
    </location>
</feature>
<feature type="repeat" description="6">
    <location>
        <begin position="256"/>
        <end position="265"/>
    </location>
</feature>
<feature type="region of interest" description="Disordered" evidence="3">
    <location>
        <begin position="148"/>
        <end position="274"/>
    </location>
</feature>
<feature type="region of interest" description="6 X 10 AA repeats of P-P-Q-G-F-P-P-G-G-P">
    <location>
        <begin position="162"/>
        <end position="265"/>
    </location>
</feature>
<feature type="compositionally biased region" description="Low complexity" evidence="3">
    <location>
        <begin position="173"/>
        <end position="187"/>
    </location>
</feature>
<feature type="compositionally biased region" description="Low complexity" evidence="3">
    <location>
        <begin position="216"/>
        <end position="226"/>
    </location>
</feature>
<feature type="compositionally biased region" description="Gly residues" evidence="3">
    <location>
        <begin position="265"/>
        <end position="274"/>
    </location>
</feature>
<comment type="function">
    <text evidence="1">Plays a role in pre-mRNA splicing as a core component of the spliceosomal U1, U2, U4 and U5 small nuclear ribonucleoproteins (snRNPs), the building blocks of the spliceosome.</text>
</comment>
<comment type="subcellular location">
    <subcellularLocation>
        <location evidence="1">Cytoplasm</location>
        <location evidence="1">Cytosol</location>
    </subcellularLocation>
    <subcellularLocation>
        <location evidence="1">Nucleus</location>
    </subcellularLocation>
</comment>
<comment type="similarity">
    <text evidence="4">Belongs to the snRNP SmB/SmN family.</text>
</comment>
<reference key="1">
    <citation type="journal article" date="2002" name="Nature">
        <title>Sequence and analysis of chromosome 2 of Dictyostelium discoideum.</title>
        <authorList>
            <person name="Gloeckner G."/>
            <person name="Eichinger L."/>
            <person name="Szafranski K."/>
            <person name="Pachebat J.A."/>
            <person name="Bankier A.T."/>
            <person name="Dear P.H."/>
            <person name="Lehmann R."/>
            <person name="Baumgart C."/>
            <person name="Parra G."/>
            <person name="Abril J.F."/>
            <person name="Guigo R."/>
            <person name="Kumpf K."/>
            <person name="Tunggal B."/>
            <person name="Cox E.C."/>
            <person name="Quail M.A."/>
            <person name="Platzer M."/>
            <person name="Rosenthal A."/>
            <person name="Noegel A.A."/>
        </authorList>
    </citation>
    <scope>NUCLEOTIDE SEQUENCE [LARGE SCALE GENOMIC DNA]</scope>
    <source>
        <strain>AX4</strain>
    </source>
</reference>
<reference key="2">
    <citation type="journal article" date="2005" name="Nature">
        <title>The genome of the social amoeba Dictyostelium discoideum.</title>
        <authorList>
            <person name="Eichinger L."/>
            <person name="Pachebat J.A."/>
            <person name="Gloeckner G."/>
            <person name="Rajandream M.A."/>
            <person name="Sucgang R."/>
            <person name="Berriman M."/>
            <person name="Song J."/>
            <person name="Olsen R."/>
            <person name="Szafranski K."/>
            <person name="Xu Q."/>
            <person name="Tunggal B."/>
            <person name="Kummerfeld S."/>
            <person name="Madera M."/>
            <person name="Konfortov B.A."/>
            <person name="Rivero F."/>
            <person name="Bankier A.T."/>
            <person name="Lehmann R."/>
            <person name="Hamlin N."/>
            <person name="Davies R."/>
            <person name="Gaudet P."/>
            <person name="Fey P."/>
            <person name="Pilcher K."/>
            <person name="Chen G."/>
            <person name="Saunders D."/>
            <person name="Sodergren E.J."/>
            <person name="Davis P."/>
            <person name="Kerhornou A."/>
            <person name="Nie X."/>
            <person name="Hall N."/>
            <person name="Anjard C."/>
            <person name="Hemphill L."/>
            <person name="Bason N."/>
            <person name="Farbrother P."/>
            <person name="Desany B."/>
            <person name="Just E."/>
            <person name="Morio T."/>
            <person name="Rost R."/>
            <person name="Churcher C.M."/>
            <person name="Cooper J."/>
            <person name="Haydock S."/>
            <person name="van Driessche N."/>
            <person name="Cronin A."/>
            <person name="Goodhead I."/>
            <person name="Muzny D.M."/>
            <person name="Mourier T."/>
            <person name="Pain A."/>
            <person name="Lu M."/>
            <person name="Harper D."/>
            <person name="Lindsay R."/>
            <person name="Hauser H."/>
            <person name="James K.D."/>
            <person name="Quiles M."/>
            <person name="Madan Babu M."/>
            <person name="Saito T."/>
            <person name="Buchrieser C."/>
            <person name="Wardroper A."/>
            <person name="Felder M."/>
            <person name="Thangavelu M."/>
            <person name="Johnson D."/>
            <person name="Knights A."/>
            <person name="Loulseged H."/>
            <person name="Mungall K.L."/>
            <person name="Oliver K."/>
            <person name="Price C."/>
            <person name="Quail M.A."/>
            <person name="Urushihara H."/>
            <person name="Hernandez J."/>
            <person name="Rabbinowitsch E."/>
            <person name="Steffen D."/>
            <person name="Sanders M."/>
            <person name="Ma J."/>
            <person name="Kohara Y."/>
            <person name="Sharp S."/>
            <person name="Simmonds M.N."/>
            <person name="Spiegler S."/>
            <person name="Tivey A."/>
            <person name="Sugano S."/>
            <person name="White B."/>
            <person name="Walker D."/>
            <person name="Woodward J.R."/>
            <person name="Winckler T."/>
            <person name="Tanaka Y."/>
            <person name="Shaulsky G."/>
            <person name="Schleicher M."/>
            <person name="Weinstock G.M."/>
            <person name="Rosenthal A."/>
            <person name="Cox E.C."/>
            <person name="Chisholm R.L."/>
            <person name="Gibbs R.A."/>
            <person name="Loomis W.F."/>
            <person name="Platzer M."/>
            <person name="Kay R.R."/>
            <person name="Williams J.G."/>
            <person name="Dear P.H."/>
            <person name="Noegel A.A."/>
            <person name="Barrell B.G."/>
            <person name="Kuspa A."/>
        </authorList>
    </citation>
    <scope>NUCLEOTIDE SEQUENCE [LARGE SCALE GENOMIC DNA]</scope>
    <source>
        <strain>AX4</strain>
    </source>
</reference>
<dbReference type="EMBL" id="AAFI02000008">
    <property type="protein sequence ID" value="EAL71312.1"/>
    <property type="molecule type" value="Genomic_DNA"/>
</dbReference>
<dbReference type="RefSeq" id="XP_645139.1">
    <property type="nucleotide sequence ID" value="XM_640047.1"/>
</dbReference>
<dbReference type="SMR" id="Q55A45"/>
<dbReference type="FunCoup" id="Q55A45">
    <property type="interactions" value="196"/>
</dbReference>
<dbReference type="STRING" id="44689.Q55A45"/>
<dbReference type="PaxDb" id="44689-DDB0233178"/>
<dbReference type="EnsemblProtists" id="EAL71312">
    <property type="protein sequence ID" value="EAL71312"/>
    <property type="gene ID" value="DDB_G0272320"/>
</dbReference>
<dbReference type="GeneID" id="8618309"/>
<dbReference type="KEGG" id="ddi:DDB_G0272320"/>
<dbReference type="dictyBase" id="DDB_G0272320">
    <property type="gene designation" value="snrpb"/>
</dbReference>
<dbReference type="VEuPathDB" id="AmoebaDB:DDB_G0272320"/>
<dbReference type="eggNOG" id="KOG3168">
    <property type="taxonomic scope" value="Eukaryota"/>
</dbReference>
<dbReference type="HOGENOM" id="CLU_076902_1_0_1"/>
<dbReference type="InParanoid" id="Q55A45"/>
<dbReference type="OMA" id="KMINYRM"/>
<dbReference type="PhylomeDB" id="Q55A45"/>
<dbReference type="Reactome" id="R-DDI-111367">
    <property type="pathway name" value="SLBP independent Processing of Histone Pre-mRNAs"/>
</dbReference>
<dbReference type="Reactome" id="R-DDI-72163">
    <property type="pathway name" value="mRNA Splicing - Major Pathway"/>
</dbReference>
<dbReference type="Reactome" id="R-DDI-73856">
    <property type="pathway name" value="RNA Polymerase II Transcription Termination"/>
</dbReference>
<dbReference type="Reactome" id="R-DDI-77588">
    <property type="pathway name" value="SLBP Dependent Processing of Replication-Dependent Histone Pre-mRNAs"/>
</dbReference>
<dbReference type="PRO" id="PR:Q55A45"/>
<dbReference type="Proteomes" id="UP000002195">
    <property type="component" value="Chromosome 2"/>
</dbReference>
<dbReference type="GO" id="GO:0071013">
    <property type="term" value="C:catalytic step 2 spliceosome"/>
    <property type="evidence" value="ECO:0000318"/>
    <property type="project" value="GO_Central"/>
</dbReference>
<dbReference type="GO" id="GO:0005737">
    <property type="term" value="C:cytoplasm"/>
    <property type="evidence" value="ECO:0000318"/>
    <property type="project" value="GO_Central"/>
</dbReference>
<dbReference type="GO" id="GO:0005829">
    <property type="term" value="C:cytosol"/>
    <property type="evidence" value="ECO:0007669"/>
    <property type="project" value="UniProtKB-SubCell"/>
</dbReference>
<dbReference type="GO" id="GO:0005685">
    <property type="term" value="C:U1 snRNP"/>
    <property type="evidence" value="ECO:0000250"/>
    <property type="project" value="UniProtKB"/>
</dbReference>
<dbReference type="GO" id="GO:0005686">
    <property type="term" value="C:U2 snRNP"/>
    <property type="evidence" value="ECO:0000318"/>
    <property type="project" value="GO_Central"/>
</dbReference>
<dbReference type="GO" id="GO:0071004">
    <property type="term" value="C:U2-type prespliceosome"/>
    <property type="evidence" value="ECO:0000318"/>
    <property type="project" value="GO_Central"/>
</dbReference>
<dbReference type="GO" id="GO:0005687">
    <property type="term" value="C:U4 snRNP"/>
    <property type="evidence" value="ECO:0000250"/>
    <property type="project" value="UniProtKB"/>
</dbReference>
<dbReference type="GO" id="GO:0046540">
    <property type="term" value="C:U4/U6 x U5 tri-snRNP complex"/>
    <property type="evidence" value="ECO:0000318"/>
    <property type="project" value="GO_Central"/>
</dbReference>
<dbReference type="GO" id="GO:0005682">
    <property type="term" value="C:U5 snRNP"/>
    <property type="evidence" value="ECO:0000318"/>
    <property type="project" value="GO_Central"/>
</dbReference>
<dbReference type="GO" id="GO:0003723">
    <property type="term" value="F:RNA binding"/>
    <property type="evidence" value="ECO:0007669"/>
    <property type="project" value="UniProtKB-KW"/>
</dbReference>
<dbReference type="GO" id="GO:0070990">
    <property type="term" value="F:snRNP binding"/>
    <property type="evidence" value="ECO:0000318"/>
    <property type="project" value="GO_Central"/>
</dbReference>
<dbReference type="GO" id="GO:0000398">
    <property type="term" value="P:mRNA splicing, via spliceosome"/>
    <property type="evidence" value="ECO:0000318"/>
    <property type="project" value="GO_Central"/>
</dbReference>
<dbReference type="CDD" id="cd01717">
    <property type="entry name" value="Sm_B"/>
    <property type="match status" value="1"/>
</dbReference>
<dbReference type="Gene3D" id="2.30.30.100">
    <property type="match status" value="1"/>
</dbReference>
<dbReference type="InterPro" id="IPR010920">
    <property type="entry name" value="LSM_dom_sf"/>
</dbReference>
<dbReference type="InterPro" id="IPR047575">
    <property type="entry name" value="Sm"/>
</dbReference>
<dbReference type="InterPro" id="IPR001163">
    <property type="entry name" value="Sm_dom_euk/arc"/>
</dbReference>
<dbReference type="InterPro" id="IPR050914">
    <property type="entry name" value="snRNP_SmB/NAA38-like"/>
</dbReference>
<dbReference type="PANTHER" id="PTHR10701:SF0">
    <property type="entry name" value="SMALL NUCLEAR RIBONUCLEOPROTEIN-ASSOCIATED PROTEIN B"/>
    <property type="match status" value="1"/>
</dbReference>
<dbReference type="PANTHER" id="PTHR10701">
    <property type="entry name" value="SMALL NUCLEAR RIBONUCLEOPROTEIN-ASSOCIATED PROTEIN B AND N"/>
    <property type="match status" value="1"/>
</dbReference>
<dbReference type="Pfam" id="PF01423">
    <property type="entry name" value="LSM"/>
    <property type="match status" value="1"/>
</dbReference>
<dbReference type="SMART" id="SM00651">
    <property type="entry name" value="Sm"/>
    <property type="match status" value="1"/>
</dbReference>
<dbReference type="SUPFAM" id="SSF50182">
    <property type="entry name" value="Sm-like ribonucleoproteins"/>
    <property type="match status" value="1"/>
</dbReference>
<dbReference type="PROSITE" id="PS52002">
    <property type="entry name" value="SM"/>
    <property type="match status" value="1"/>
</dbReference>